<proteinExistence type="evidence at protein level"/>
<sequence length="915" mass="101555">MASESDTEEFYDAPEDVHLGTGYPVGSPGKVGLLSFKEAENTANQAGNESPVQELRQDVSKKIIESIIEESQKVLQLEDDSLDSKGKGLSDEATAGPSVAGTEFSNIPGLLAIEHELQQDSEKAESQNVAEESELETQKCFPSDETCEKSEKTVDETDNLTEVSSGEQLDASGLEAETLNKEALEVKEGDVLDPASLDTLSTTDFAAVEEVAPAKPPRHLTPEPDIVASTKKPVPARPPPPTNFPPPRPPPPSRPAPPPRKKKSELEFEALKTPDLDVPKENITSDSLLTTNMASENTVRDSLPSLDLASATSGDKIVTAQENGKAPDVQTVAGEVMGPQRPRSNSGRELTDEEILASVMIKNLDTGEEIPLSLAEEKLPTGINPLTLHIMRRTKEYVSNDATQSDDEEKLQSQQTDTDGGRLKQKTTQLKKFLGKSVKRAKHLAEEYGERAINKVKSVRDEVFHTDQDDPSSSDDEGMPYTRPVKFKAAHGFKGPYDFDQIKVVQDLSGEHMGAVWTMKFSHCGRLLASAGQDNIVRIWALKNAFDYFNNMRMKYNTEGRVSPSPSQESLSSSKSDTDMGVCSGTDEDPDDKNAPFRQRPFCKYKGHTADLLDLSWSKNYFLLSSSMDKTVRLWHISRRECLCCFQHIDFVTAIAFHPRDDRYFLSGSLDGKLRLWNIPDKKVALWNEVDGQTKLITAANFCQNGKYAVIGTYDGRCIFYDTEHLKYHTQIHVRSTRGRNKVGRKITGIEPLPGENKILVTSNDSRIRLYDLRDLSLSMKYKGYVNSSSQIKASFSHDFTYLVSGSEDKYVYIWSTYHDLSKFTSVRRDRNDFWEGIKAHNAVVTSAIFAPNPSLMLSLDVQSEKLEGIDKYEDAEVLDSTSTGIVKTDNTEVLLSADFTGAIKVFINKRKTVS</sequence>
<comment type="function">
    <text evidence="1">Downstream effector for Rab11 which regulates Rab11 intracellular membrane trafficking functions such as endocytic recycling, intracellular ciliogenesis and protein export (By similarity). ATK1-mediated phosphorylation of WDR44 induces binding to Rab11 which activates endocytic recycling of transferrin receptor back to the plasma membrane (By similarity). When bound to Rab11, prevents the formation of the ciliogenic Rab11-Rabin8/RAB3IP-RAB11FIP3 complex, therefore inhibiting preciliary trafficking and ciliogenesis (By similarity). Participates in neo-synthesized protein export by connecting the endoplasmic reticulum (ER) with the endosomal tubule via direct interactions with the integral ER proteins VAPA or VAPB and the endosomal protein GRAFs (GRAF1/ARHGAP26 or GRAF2/ARHGAP10), which facilitates the transfer of proteins such as E-cadherin, MPP14 and CFTR into a Rab8-Rab10-Rab11-dependent export route (By similarity).</text>
</comment>
<comment type="subunit">
    <text evidence="1 2">Interacts with the GTP-bound form of RAB11 when membrane-associated. Interacts with GRAF1/ARHGAP26 or GRAF2/ARHGAP10; the interaction connects the endoplasmic reticulum (ER) with the endosomal tubule (By similarity). Interacts (via FFAT-like motif) with VAPA (via MSP domain) or VAPB (via MSP domain); the interaction connects the ER with the endosomal tubule (By similarity). Does not bind to other Rab and Rho small G proteins.</text>
</comment>
<comment type="subcellular location">
    <subcellularLocation>
        <location evidence="2">Cytoplasm</location>
        <location evidence="2">Cytosol</location>
    </subcellularLocation>
    <subcellularLocation>
        <location evidence="2">Cytoplasm</location>
        <location evidence="2">Perinuclear region</location>
    </subcellularLocation>
    <subcellularLocation>
        <location evidence="2">Endosome membrane</location>
    </subcellularLocation>
    <subcellularLocation>
        <location evidence="2">Golgi apparatus</location>
        <location evidence="2">trans-Golgi network</location>
    </subcellularLocation>
    <text evidence="2">Colocalized with RAB11 along microtubules oriented toward lamellipodia.</text>
</comment>
<comment type="alternative products">
    <event type="alternative splicing"/>
    <isoform>
        <id>Q6NVE8-1</id>
        <name>1</name>
        <sequence type="displayed"/>
    </isoform>
    <isoform>
        <id>Q6NVE8-2</id>
        <name>2</name>
        <sequence type="described" ref="VSP_021811"/>
    </isoform>
</comment>
<comment type="domain">
    <text evidence="1">The FFAT-like motif is important for interaction with VAPA or VAPB.</text>
</comment>
<comment type="PTM">
    <text evidence="1">Phosphorylated by ATK1; the phosphorylation stabilizes its interaction with RAB11A and RAB11B.</text>
</comment>
<reference key="1">
    <citation type="journal article" date="2005" name="Science">
        <title>The transcriptional landscape of the mammalian genome.</title>
        <authorList>
            <person name="Carninci P."/>
            <person name="Kasukawa T."/>
            <person name="Katayama S."/>
            <person name="Gough J."/>
            <person name="Frith M.C."/>
            <person name="Maeda N."/>
            <person name="Oyama R."/>
            <person name="Ravasi T."/>
            <person name="Lenhard B."/>
            <person name="Wells C."/>
            <person name="Kodzius R."/>
            <person name="Shimokawa K."/>
            <person name="Bajic V.B."/>
            <person name="Brenner S.E."/>
            <person name="Batalov S."/>
            <person name="Forrest A.R."/>
            <person name="Zavolan M."/>
            <person name="Davis M.J."/>
            <person name="Wilming L.G."/>
            <person name="Aidinis V."/>
            <person name="Allen J.E."/>
            <person name="Ambesi-Impiombato A."/>
            <person name="Apweiler R."/>
            <person name="Aturaliya R.N."/>
            <person name="Bailey T.L."/>
            <person name="Bansal M."/>
            <person name="Baxter L."/>
            <person name="Beisel K.W."/>
            <person name="Bersano T."/>
            <person name="Bono H."/>
            <person name="Chalk A.M."/>
            <person name="Chiu K.P."/>
            <person name="Choudhary V."/>
            <person name="Christoffels A."/>
            <person name="Clutterbuck D.R."/>
            <person name="Crowe M.L."/>
            <person name="Dalla E."/>
            <person name="Dalrymple B.P."/>
            <person name="de Bono B."/>
            <person name="Della Gatta G."/>
            <person name="di Bernardo D."/>
            <person name="Down T."/>
            <person name="Engstrom P."/>
            <person name="Fagiolini M."/>
            <person name="Faulkner G."/>
            <person name="Fletcher C.F."/>
            <person name="Fukushima T."/>
            <person name="Furuno M."/>
            <person name="Futaki S."/>
            <person name="Gariboldi M."/>
            <person name="Georgii-Hemming P."/>
            <person name="Gingeras T.R."/>
            <person name="Gojobori T."/>
            <person name="Green R.E."/>
            <person name="Gustincich S."/>
            <person name="Harbers M."/>
            <person name="Hayashi Y."/>
            <person name="Hensch T.K."/>
            <person name="Hirokawa N."/>
            <person name="Hill D."/>
            <person name="Huminiecki L."/>
            <person name="Iacono M."/>
            <person name="Ikeo K."/>
            <person name="Iwama A."/>
            <person name="Ishikawa T."/>
            <person name="Jakt M."/>
            <person name="Kanapin A."/>
            <person name="Katoh M."/>
            <person name="Kawasawa Y."/>
            <person name="Kelso J."/>
            <person name="Kitamura H."/>
            <person name="Kitano H."/>
            <person name="Kollias G."/>
            <person name="Krishnan S.P."/>
            <person name="Kruger A."/>
            <person name="Kummerfeld S.K."/>
            <person name="Kurochkin I.V."/>
            <person name="Lareau L.F."/>
            <person name="Lazarevic D."/>
            <person name="Lipovich L."/>
            <person name="Liu J."/>
            <person name="Liuni S."/>
            <person name="McWilliam S."/>
            <person name="Madan Babu M."/>
            <person name="Madera M."/>
            <person name="Marchionni L."/>
            <person name="Matsuda H."/>
            <person name="Matsuzawa S."/>
            <person name="Miki H."/>
            <person name="Mignone F."/>
            <person name="Miyake S."/>
            <person name="Morris K."/>
            <person name="Mottagui-Tabar S."/>
            <person name="Mulder N."/>
            <person name="Nakano N."/>
            <person name="Nakauchi H."/>
            <person name="Ng P."/>
            <person name="Nilsson R."/>
            <person name="Nishiguchi S."/>
            <person name="Nishikawa S."/>
            <person name="Nori F."/>
            <person name="Ohara O."/>
            <person name="Okazaki Y."/>
            <person name="Orlando V."/>
            <person name="Pang K.C."/>
            <person name="Pavan W.J."/>
            <person name="Pavesi G."/>
            <person name="Pesole G."/>
            <person name="Petrovsky N."/>
            <person name="Piazza S."/>
            <person name="Reed J."/>
            <person name="Reid J.F."/>
            <person name="Ring B.Z."/>
            <person name="Ringwald M."/>
            <person name="Rost B."/>
            <person name="Ruan Y."/>
            <person name="Salzberg S.L."/>
            <person name="Sandelin A."/>
            <person name="Schneider C."/>
            <person name="Schoenbach C."/>
            <person name="Sekiguchi K."/>
            <person name="Semple C.A."/>
            <person name="Seno S."/>
            <person name="Sessa L."/>
            <person name="Sheng Y."/>
            <person name="Shibata Y."/>
            <person name="Shimada H."/>
            <person name="Shimada K."/>
            <person name="Silva D."/>
            <person name="Sinclair B."/>
            <person name="Sperling S."/>
            <person name="Stupka E."/>
            <person name="Sugiura K."/>
            <person name="Sultana R."/>
            <person name="Takenaka Y."/>
            <person name="Taki K."/>
            <person name="Tammoja K."/>
            <person name="Tan S.L."/>
            <person name="Tang S."/>
            <person name="Taylor M.S."/>
            <person name="Tegner J."/>
            <person name="Teichmann S.A."/>
            <person name="Ueda H.R."/>
            <person name="van Nimwegen E."/>
            <person name="Verardo R."/>
            <person name="Wei C.L."/>
            <person name="Yagi K."/>
            <person name="Yamanishi H."/>
            <person name="Zabarovsky E."/>
            <person name="Zhu S."/>
            <person name="Zimmer A."/>
            <person name="Hide W."/>
            <person name="Bult C."/>
            <person name="Grimmond S.M."/>
            <person name="Teasdale R.D."/>
            <person name="Liu E.T."/>
            <person name="Brusic V."/>
            <person name="Quackenbush J."/>
            <person name="Wahlestedt C."/>
            <person name="Mattick J.S."/>
            <person name="Hume D.A."/>
            <person name="Kai C."/>
            <person name="Sasaki D."/>
            <person name="Tomaru Y."/>
            <person name="Fukuda S."/>
            <person name="Kanamori-Katayama M."/>
            <person name="Suzuki M."/>
            <person name="Aoki J."/>
            <person name="Arakawa T."/>
            <person name="Iida J."/>
            <person name="Imamura K."/>
            <person name="Itoh M."/>
            <person name="Kato T."/>
            <person name="Kawaji H."/>
            <person name="Kawagashira N."/>
            <person name="Kawashima T."/>
            <person name="Kojima M."/>
            <person name="Kondo S."/>
            <person name="Konno H."/>
            <person name="Nakano K."/>
            <person name="Ninomiya N."/>
            <person name="Nishio T."/>
            <person name="Okada M."/>
            <person name="Plessy C."/>
            <person name="Shibata K."/>
            <person name="Shiraki T."/>
            <person name="Suzuki S."/>
            <person name="Tagami M."/>
            <person name="Waki K."/>
            <person name="Watahiki A."/>
            <person name="Okamura-Oho Y."/>
            <person name="Suzuki H."/>
            <person name="Kawai J."/>
            <person name="Hayashizaki Y."/>
        </authorList>
    </citation>
    <scope>NUCLEOTIDE SEQUENCE [LARGE SCALE MRNA] (ISOFORM 2)</scope>
    <scope>NUCLEOTIDE SEQUENCE [LARGE SCALE MRNA] OF 1-259 (ISOFORM 1)</scope>
    <source>
        <strain>C57BL/6J</strain>
        <strain>NOD</strain>
        <tissue>Egg</tissue>
        <tissue>Thymus</tissue>
    </source>
</reference>
<reference key="2">
    <citation type="journal article" date="2004" name="Genome Res.">
        <title>The status, quality, and expansion of the NIH full-length cDNA project: the Mammalian Gene Collection (MGC).</title>
        <authorList>
            <consortium name="The MGC Project Team"/>
        </authorList>
    </citation>
    <scope>NUCLEOTIDE SEQUENCE [LARGE SCALE MRNA] (ISOFORM 1)</scope>
    <source>
        <strain>C57BL/6J</strain>
        <strain>FVB/N</strain>
        <tissue>Brain</tissue>
        <tissue>Colon</tissue>
    </source>
</reference>
<reference key="3">
    <citation type="journal article" date="2007" name="Proc. Natl. Acad. Sci. U.S.A.">
        <title>Large-scale phosphorylation analysis of mouse liver.</title>
        <authorList>
            <person name="Villen J."/>
            <person name="Beausoleil S.A."/>
            <person name="Gerber S.A."/>
            <person name="Gygi S.P."/>
        </authorList>
    </citation>
    <scope>ACETYLATION [LARGE SCALE ANALYSIS] AT ALA-2</scope>
    <scope>PHOSPHORYLATION [LARGE SCALE ANALYSIS] AT SER-405; SER-472; SER-473 AND SER-474</scope>
    <scope>CLEAVAGE OF INITIATOR METHIONINE [LARGE SCALE ANALYSIS]</scope>
    <scope>IDENTIFICATION BY MASS SPECTROMETRY [LARGE SCALE ANALYSIS]</scope>
    <source>
        <tissue>Liver</tissue>
    </source>
</reference>
<reference key="4">
    <citation type="journal article" date="2010" name="Cell">
        <title>A tissue-specific atlas of mouse protein phosphorylation and expression.</title>
        <authorList>
            <person name="Huttlin E.L."/>
            <person name="Jedrychowski M.P."/>
            <person name="Elias J.E."/>
            <person name="Goswami T."/>
            <person name="Rad R."/>
            <person name="Beausoleil S.A."/>
            <person name="Villen J."/>
            <person name="Haas W."/>
            <person name="Sowa M.E."/>
            <person name="Gygi S.P."/>
        </authorList>
    </citation>
    <scope>PHOSPHORYLATION [LARGE SCALE ANALYSIS] AT SER-50; THR-221; SER-344; THR-403; SER-405; SER-472; SER-473; SER-474; TYR-481; SER-563 AND SER-567</scope>
    <scope>IDENTIFICATION BY MASS SPECTROMETRY [LARGE SCALE ANALYSIS]</scope>
    <source>
        <tissue>Brain</tissue>
        <tissue>Brown adipose tissue</tissue>
        <tissue>Heart</tissue>
        <tissue>Kidney</tissue>
        <tissue>Liver</tissue>
        <tissue>Lung</tissue>
        <tissue>Pancreas</tissue>
        <tissue>Spleen</tissue>
        <tissue>Testis</tissue>
    </source>
</reference>
<gene>
    <name evidence="8" type="primary">Wdr44</name>
    <name type="synonym">RPH11</name>
</gene>
<name>WDR44_MOUSE</name>
<evidence type="ECO:0000250" key="1">
    <source>
        <dbReference type="UniProtKB" id="Q5JSH3"/>
    </source>
</evidence>
<evidence type="ECO:0000250" key="2">
    <source>
        <dbReference type="UniProtKB" id="Q9R037"/>
    </source>
</evidence>
<evidence type="ECO:0000250" key="3">
    <source>
        <dbReference type="UniProtKB" id="Q9XSC3"/>
    </source>
</evidence>
<evidence type="ECO:0000255" key="4"/>
<evidence type="ECO:0000256" key="5">
    <source>
        <dbReference type="SAM" id="MobiDB-lite"/>
    </source>
</evidence>
<evidence type="ECO:0000303" key="6">
    <source>
    </source>
</evidence>
<evidence type="ECO:0000305" key="7"/>
<evidence type="ECO:0000312" key="8">
    <source>
        <dbReference type="MGI" id="MGI:1919654"/>
    </source>
</evidence>
<evidence type="ECO:0007744" key="9">
    <source>
    </source>
</evidence>
<evidence type="ECO:0007744" key="10">
    <source>
    </source>
</evidence>
<keyword id="KW-0007">Acetylation</keyword>
<keyword id="KW-0025">Alternative splicing</keyword>
<keyword id="KW-0175">Coiled coil</keyword>
<keyword id="KW-0963">Cytoplasm</keyword>
<keyword id="KW-0967">Endosome</keyword>
<keyword id="KW-0333">Golgi apparatus</keyword>
<keyword id="KW-0472">Membrane</keyword>
<keyword id="KW-0597">Phosphoprotein</keyword>
<keyword id="KW-1185">Reference proteome</keyword>
<keyword id="KW-0677">Repeat</keyword>
<keyword id="KW-0853">WD repeat</keyword>
<feature type="initiator methionine" description="Removed" evidence="9">
    <location>
        <position position="1"/>
    </location>
</feature>
<feature type="chain" id="PRO_0000262770" description="WD repeat-containing protein 44">
    <location>
        <begin position="2"/>
        <end position="915"/>
    </location>
</feature>
<feature type="repeat" description="WD 1">
    <location>
        <begin position="511"/>
        <end position="550"/>
    </location>
</feature>
<feature type="repeat" description="WD 2">
    <location>
        <begin position="607"/>
        <end position="645"/>
    </location>
</feature>
<feature type="repeat" description="WD 3">
    <location>
        <begin position="647"/>
        <end position="687"/>
    </location>
</feature>
<feature type="repeat" description="WD 4">
    <location>
        <begin position="692"/>
        <end position="731"/>
    </location>
</feature>
<feature type="repeat" description="WD 5">
    <location>
        <begin position="742"/>
        <end position="781"/>
    </location>
</feature>
<feature type="repeat" description="WD 6">
    <location>
        <begin position="786"/>
        <end position="825"/>
    </location>
</feature>
<feature type="repeat" description="WD 7">
    <location>
        <begin position="840"/>
        <end position="880"/>
    </location>
</feature>
<feature type="repeat" description="WD 8">
    <location>
        <begin position="882"/>
        <end position="915"/>
    </location>
</feature>
<feature type="region of interest" description="Disordered" evidence="5">
    <location>
        <begin position="1"/>
        <end position="24"/>
    </location>
</feature>
<feature type="region of interest" description="Binding activity">
    <location>
        <begin position="2"/>
        <end position="173"/>
    </location>
</feature>
<feature type="region of interest" description="Disordered" evidence="5">
    <location>
        <begin position="79"/>
        <end position="102"/>
    </location>
</feature>
<feature type="region of interest" description="Disordered" evidence="5">
    <location>
        <begin position="117"/>
        <end position="174"/>
    </location>
</feature>
<feature type="region of interest" description="Disordered" evidence="5">
    <location>
        <begin position="208"/>
        <end position="282"/>
    </location>
</feature>
<feature type="region of interest" description="Important for interaction with ARHGAP26 AND ARHGAP10" evidence="1">
    <location>
        <begin position="213"/>
        <end position="259"/>
    </location>
</feature>
<feature type="region of interest" description="Important for interaction with RAB11A" evidence="1">
    <location>
        <begin position="336"/>
        <end position="349"/>
    </location>
</feature>
<feature type="region of interest" description="Disordered" evidence="5">
    <location>
        <begin position="399"/>
        <end position="425"/>
    </location>
</feature>
<feature type="region of interest" description="Disordered" evidence="5">
    <location>
        <begin position="461"/>
        <end position="481"/>
    </location>
</feature>
<feature type="region of interest" description="Disordered" evidence="5">
    <location>
        <begin position="559"/>
        <end position="593"/>
    </location>
</feature>
<feature type="coiled-coil region" evidence="4">
    <location>
        <begin position="114"/>
        <end position="139"/>
    </location>
</feature>
<feature type="short sequence motif" description="FFAT-like motif" evidence="1">
    <location>
        <begin position="9"/>
        <end position="15"/>
    </location>
</feature>
<feature type="compositionally biased region" description="Acidic residues" evidence="5">
    <location>
        <begin position="1"/>
        <end position="14"/>
    </location>
</feature>
<feature type="compositionally biased region" description="Basic and acidic residues" evidence="5">
    <location>
        <begin position="146"/>
        <end position="155"/>
    </location>
</feature>
<feature type="compositionally biased region" description="Pro residues" evidence="5">
    <location>
        <begin position="235"/>
        <end position="258"/>
    </location>
</feature>
<feature type="compositionally biased region" description="Basic and acidic residues" evidence="5">
    <location>
        <begin position="264"/>
        <end position="280"/>
    </location>
</feature>
<feature type="compositionally biased region" description="Acidic residues" evidence="5">
    <location>
        <begin position="469"/>
        <end position="478"/>
    </location>
</feature>
<feature type="compositionally biased region" description="Low complexity" evidence="5">
    <location>
        <begin position="563"/>
        <end position="575"/>
    </location>
</feature>
<feature type="modified residue" description="N-acetylalanine" evidence="9">
    <location>
        <position position="2"/>
    </location>
</feature>
<feature type="modified residue" description="Phosphoserine" evidence="1">
    <location>
        <position position="3"/>
    </location>
</feature>
<feature type="modified residue" description="Phosphotyrosine" evidence="1">
    <location>
        <position position="11"/>
    </location>
</feature>
<feature type="modified residue" description="Phosphoserine" evidence="1">
    <location>
        <position position="27"/>
    </location>
</feature>
<feature type="modified residue" description="Phosphoserine" evidence="10">
    <location>
        <position position="50"/>
    </location>
</feature>
<feature type="modified residue" description="Phosphoserine" evidence="1">
    <location>
        <position position="66"/>
    </location>
</feature>
<feature type="modified residue" description="Phosphoserine" evidence="1">
    <location>
        <position position="71"/>
    </location>
</feature>
<feature type="modified residue" description="Phosphoserine" evidence="1">
    <location>
        <position position="81"/>
    </location>
</feature>
<feature type="modified residue" description="Phosphoserine" evidence="1">
    <location>
        <position position="126"/>
    </location>
</feature>
<feature type="modified residue" description="Phosphothreonine" evidence="1">
    <location>
        <position position="161"/>
    </location>
</feature>
<feature type="modified residue" description="Phosphothreonine" evidence="10">
    <location>
        <position position="221"/>
    </location>
</feature>
<feature type="modified residue" description="Phosphoserine" evidence="1">
    <location>
        <position position="264"/>
    </location>
</feature>
<feature type="modified residue" description="Phosphothreonine" evidence="1">
    <location>
        <position position="273"/>
    </location>
</feature>
<feature type="modified residue" description="Phosphoserine" evidence="10">
    <location>
        <position position="344"/>
    </location>
</feature>
<feature type="modified residue" description="Phosphoserine" evidence="1">
    <location>
        <position position="346"/>
    </location>
</feature>
<feature type="modified residue" description="Phosphothreonine" evidence="1">
    <location>
        <position position="351"/>
    </location>
</feature>
<feature type="modified residue" description="Phosphothreonine" evidence="10">
    <location>
        <position position="403"/>
    </location>
</feature>
<feature type="modified residue" description="Phosphoserine" evidence="9 10">
    <location>
        <position position="405"/>
    </location>
</feature>
<feature type="modified residue" description="Phosphoserine" evidence="9 10">
    <location>
        <position position="472"/>
    </location>
</feature>
<feature type="modified residue" description="Phosphoserine" evidence="9 10">
    <location>
        <position position="473"/>
    </location>
</feature>
<feature type="modified residue" description="Phosphoserine" evidence="9 10">
    <location>
        <position position="474"/>
    </location>
</feature>
<feature type="modified residue" description="Phosphotyrosine" evidence="10">
    <location>
        <position position="481"/>
    </location>
</feature>
<feature type="modified residue" description="Phosphoserine" evidence="10">
    <location>
        <position position="563"/>
    </location>
</feature>
<feature type="modified residue" description="Phosphoserine" evidence="10">
    <location>
        <position position="567"/>
    </location>
</feature>
<feature type="splice variant" id="VSP_021811" description="In isoform 2." evidence="6">
    <location>
        <begin position="1"/>
        <end position="478"/>
    </location>
</feature>
<feature type="sequence conflict" description="In Ref. 1; BAE24167." evidence="7" ref="1">
    <original>D</original>
    <variation>E</variation>
    <location>
        <position position="629"/>
    </location>
</feature>
<organism>
    <name type="scientific">Mus musculus</name>
    <name type="common">Mouse</name>
    <dbReference type="NCBI Taxonomy" id="10090"/>
    <lineage>
        <taxon>Eukaryota</taxon>
        <taxon>Metazoa</taxon>
        <taxon>Chordata</taxon>
        <taxon>Craniata</taxon>
        <taxon>Vertebrata</taxon>
        <taxon>Euteleostomi</taxon>
        <taxon>Mammalia</taxon>
        <taxon>Eutheria</taxon>
        <taxon>Euarchontoglires</taxon>
        <taxon>Glires</taxon>
        <taxon>Rodentia</taxon>
        <taxon>Myomorpha</taxon>
        <taxon>Muroidea</taxon>
        <taxon>Muridae</taxon>
        <taxon>Murinae</taxon>
        <taxon>Mus</taxon>
        <taxon>Mus</taxon>
    </lineage>
</organism>
<accession>Q6NVE8</accession>
<accession>Q3UT13</accession>
<accession>Q8BTS1</accession>
<protein>
    <recommendedName>
        <fullName>WD repeat-containing protein 44</fullName>
    </recommendedName>
    <alternativeName>
        <fullName evidence="3">Rab11-binding protein</fullName>
        <shortName evidence="3">Rab11BP</shortName>
    </alternativeName>
    <alternativeName>
        <fullName evidence="2">Rabphilin-11</fullName>
    </alternativeName>
</protein>
<dbReference type="EMBL" id="AK088885">
    <property type="protein sequence ID" value="BAC40631.2"/>
    <property type="molecule type" value="mRNA"/>
</dbReference>
<dbReference type="EMBL" id="AK139877">
    <property type="protein sequence ID" value="BAE24167.1"/>
    <property type="molecule type" value="mRNA"/>
</dbReference>
<dbReference type="EMBL" id="BC068151">
    <property type="protein sequence ID" value="AAH68151.1"/>
    <property type="molecule type" value="mRNA"/>
</dbReference>
<dbReference type="EMBL" id="BC049191">
    <property type="protein sequence ID" value="AAH49191.1"/>
    <property type="molecule type" value="mRNA"/>
</dbReference>
<dbReference type="CCDS" id="CCDS40892.1">
    <molecule id="Q6NVE8-1"/>
</dbReference>
<dbReference type="RefSeq" id="NP_001292604.1">
    <molecule id="Q6NVE8-1"/>
    <property type="nucleotide sequence ID" value="NM_001305675.1"/>
</dbReference>
<dbReference type="RefSeq" id="NP_780389.2">
    <molecule id="Q6NVE8-1"/>
    <property type="nucleotide sequence ID" value="NM_175180.3"/>
</dbReference>
<dbReference type="RefSeq" id="XP_006527763.1">
    <molecule id="Q6NVE8-1"/>
    <property type="nucleotide sequence ID" value="XM_006527700.5"/>
</dbReference>
<dbReference type="SMR" id="Q6NVE8"/>
<dbReference type="BioGRID" id="215359">
    <property type="interactions" value="5"/>
</dbReference>
<dbReference type="FunCoup" id="Q6NVE8">
    <property type="interactions" value="3007"/>
</dbReference>
<dbReference type="STRING" id="10090.ENSMUSP00000044616"/>
<dbReference type="GlyGen" id="Q6NVE8">
    <property type="glycosylation" value="3 sites, 3 N-linked glycans (3 sites)"/>
</dbReference>
<dbReference type="iPTMnet" id="Q6NVE8"/>
<dbReference type="PhosphoSitePlus" id="Q6NVE8"/>
<dbReference type="SwissPalm" id="Q6NVE8"/>
<dbReference type="jPOST" id="Q6NVE8"/>
<dbReference type="PaxDb" id="10090-ENSMUSP00000044616"/>
<dbReference type="PeptideAtlas" id="Q6NVE8"/>
<dbReference type="ProteomicsDB" id="297650">
    <molecule id="Q6NVE8-1"/>
</dbReference>
<dbReference type="ProteomicsDB" id="297651">
    <molecule id="Q6NVE8-2"/>
</dbReference>
<dbReference type="Pumba" id="Q6NVE8"/>
<dbReference type="Antibodypedia" id="29682">
    <property type="antibodies" value="38 antibodies from 14 providers"/>
</dbReference>
<dbReference type="Ensembl" id="ENSMUST00000035766.13">
    <molecule id="Q6NVE8-1"/>
    <property type="protein sequence ID" value="ENSMUSP00000044616.7"/>
    <property type="gene ID" value="ENSMUSG00000036769.15"/>
</dbReference>
<dbReference type="Ensembl" id="ENSMUST00000101670.3">
    <molecule id="Q6NVE8-1"/>
    <property type="protein sequence ID" value="ENSMUSP00000099193.3"/>
    <property type="gene ID" value="ENSMUSG00000036769.15"/>
</dbReference>
<dbReference type="GeneID" id="72404"/>
<dbReference type="KEGG" id="mmu:72404"/>
<dbReference type="UCSC" id="uc009suw.2">
    <molecule id="Q6NVE8-1"/>
    <property type="organism name" value="mouse"/>
</dbReference>
<dbReference type="UCSC" id="uc009suy.1">
    <molecule id="Q6NVE8-2"/>
    <property type="organism name" value="mouse"/>
</dbReference>
<dbReference type="AGR" id="MGI:1919654"/>
<dbReference type="CTD" id="54521"/>
<dbReference type="MGI" id="MGI:1919654">
    <property type="gene designation" value="Wdr44"/>
</dbReference>
<dbReference type="VEuPathDB" id="HostDB:ENSMUSG00000036769"/>
<dbReference type="eggNOG" id="KOG0283">
    <property type="taxonomic scope" value="Eukaryota"/>
</dbReference>
<dbReference type="GeneTree" id="ENSGT00940000157557"/>
<dbReference type="HOGENOM" id="CLU_009835_2_1_1"/>
<dbReference type="InParanoid" id="Q6NVE8"/>
<dbReference type="OMA" id="SQECVRP"/>
<dbReference type="OrthoDB" id="1932312at2759"/>
<dbReference type="PhylomeDB" id="Q6NVE8"/>
<dbReference type="TreeFam" id="TF329226"/>
<dbReference type="BioGRID-ORCS" id="72404">
    <property type="hits" value="1 hit in 61 CRISPR screens"/>
</dbReference>
<dbReference type="ChiTaRS" id="Wdr44">
    <property type="organism name" value="mouse"/>
</dbReference>
<dbReference type="PRO" id="PR:Q6NVE8"/>
<dbReference type="Proteomes" id="UP000000589">
    <property type="component" value="Chromosome X"/>
</dbReference>
<dbReference type="RNAct" id="Q6NVE8">
    <property type="molecule type" value="protein"/>
</dbReference>
<dbReference type="Bgee" id="ENSMUSG00000036769">
    <property type="expression patterns" value="Expressed in lumbar dorsal root ganglion and 203 other cell types or tissues"/>
</dbReference>
<dbReference type="ExpressionAtlas" id="Q6NVE8">
    <property type="expression patterns" value="baseline and differential"/>
</dbReference>
<dbReference type="GO" id="GO:0005829">
    <property type="term" value="C:cytosol"/>
    <property type="evidence" value="ECO:0007669"/>
    <property type="project" value="UniProtKB-SubCell"/>
</dbReference>
<dbReference type="GO" id="GO:0010008">
    <property type="term" value="C:endosome membrane"/>
    <property type="evidence" value="ECO:0007669"/>
    <property type="project" value="UniProtKB-SubCell"/>
</dbReference>
<dbReference type="GO" id="GO:0005794">
    <property type="term" value="C:Golgi apparatus"/>
    <property type="evidence" value="ECO:0007669"/>
    <property type="project" value="UniProtKB-SubCell"/>
</dbReference>
<dbReference type="GO" id="GO:0048471">
    <property type="term" value="C:perinuclear region of cytoplasm"/>
    <property type="evidence" value="ECO:0007669"/>
    <property type="project" value="UniProtKB-SubCell"/>
</dbReference>
<dbReference type="GO" id="GO:0140313">
    <property type="term" value="F:molecular sequestering activity"/>
    <property type="evidence" value="ECO:0000250"/>
    <property type="project" value="UniProtKB"/>
</dbReference>
<dbReference type="GO" id="GO:0031267">
    <property type="term" value="F:small GTPase binding"/>
    <property type="evidence" value="ECO:0000250"/>
    <property type="project" value="UniProtKB"/>
</dbReference>
<dbReference type="GO" id="GO:0061824">
    <property type="term" value="P:cytosolic ciliogenesis"/>
    <property type="evidence" value="ECO:0000250"/>
    <property type="project" value="UniProtKB"/>
</dbReference>
<dbReference type="GO" id="GO:1902018">
    <property type="term" value="P:negative regulation of cilium assembly"/>
    <property type="evidence" value="ECO:0000250"/>
    <property type="project" value="UniProtKB"/>
</dbReference>
<dbReference type="GO" id="GO:0060627">
    <property type="term" value="P:regulation of vesicle-mediated transport"/>
    <property type="evidence" value="ECO:0000250"/>
    <property type="project" value="UniProtKB"/>
</dbReference>
<dbReference type="Gene3D" id="2.130.10.10">
    <property type="entry name" value="YVTN repeat-like/Quinoprotein amine dehydrogenase"/>
    <property type="match status" value="1"/>
</dbReference>
<dbReference type="InterPro" id="IPR020472">
    <property type="entry name" value="G-protein_beta_WD-40_rep"/>
</dbReference>
<dbReference type="InterPro" id="IPR015943">
    <property type="entry name" value="WD40/YVTN_repeat-like_dom_sf"/>
</dbReference>
<dbReference type="InterPro" id="IPR036322">
    <property type="entry name" value="WD40_repeat_dom_sf"/>
</dbReference>
<dbReference type="InterPro" id="IPR001680">
    <property type="entry name" value="WD40_rpt"/>
</dbReference>
<dbReference type="InterPro" id="IPR040324">
    <property type="entry name" value="WDR44/Dgr2"/>
</dbReference>
<dbReference type="PANTHER" id="PTHR14221">
    <property type="entry name" value="WD REPEAT DOMAIN 44"/>
    <property type="match status" value="1"/>
</dbReference>
<dbReference type="PANTHER" id="PTHR14221:SF0">
    <property type="entry name" value="WD REPEAT-CONTAINING PROTEIN 44"/>
    <property type="match status" value="1"/>
</dbReference>
<dbReference type="Pfam" id="PF00400">
    <property type="entry name" value="WD40"/>
    <property type="match status" value="4"/>
</dbReference>
<dbReference type="PRINTS" id="PR00320">
    <property type="entry name" value="GPROTEINBRPT"/>
</dbReference>
<dbReference type="SMART" id="SM00320">
    <property type="entry name" value="WD40"/>
    <property type="match status" value="6"/>
</dbReference>
<dbReference type="SUPFAM" id="SSF50978">
    <property type="entry name" value="WD40 repeat-like"/>
    <property type="match status" value="1"/>
</dbReference>
<dbReference type="PROSITE" id="PS50082">
    <property type="entry name" value="WD_REPEATS_2"/>
    <property type="match status" value="4"/>
</dbReference>
<dbReference type="PROSITE" id="PS50294">
    <property type="entry name" value="WD_REPEATS_REGION"/>
    <property type="match status" value="1"/>
</dbReference>